<dbReference type="EC" id="6.3.4.4" evidence="2"/>
<dbReference type="EMBL" id="CH408030">
    <property type="protein sequence ID" value="EAQ91221.1"/>
    <property type="molecule type" value="Genomic_DNA"/>
</dbReference>
<dbReference type="RefSeq" id="XP_001229672.1">
    <property type="nucleotide sequence ID" value="XM_001229671.1"/>
</dbReference>
<dbReference type="SMR" id="Q2H9E8"/>
<dbReference type="FunCoup" id="Q2H9E8">
    <property type="interactions" value="720"/>
</dbReference>
<dbReference type="STRING" id="306901.Q2H9E8"/>
<dbReference type="GeneID" id="4388925"/>
<dbReference type="VEuPathDB" id="FungiDB:CHGG_03156"/>
<dbReference type="eggNOG" id="KOG1355">
    <property type="taxonomic scope" value="Eukaryota"/>
</dbReference>
<dbReference type="HOGENOM" id="CLU_029848_3_2_1"/>
<dbReference type="InParanoid" id="Q2H9E8"/>
<dbReference type="OMA" id="FHHAKPI"/>
<dbReference type="OrthoDB" id="10265645at2759"/>
<dbReference type="UniPathway" id="UPA00075">
    <property type="reaction ID" value="UER00335"/>
</dbReference>
<dbReference type="Proteomes" id="UP000001056">
    <property type="component" value="Unassembled WGS sequence"/>
</dbReference>
<dbReference type="GO" id="GO:0005737">
    <property type="term" value="C:cytoplasm"/>
    <property type="evidence" value="ECO:0007669"/>
    <property type="project" value="UniProtKB-SubCell"/>
</dbReference>
<dbReference type="GO" id="GO:0004019">
    <property type="term" value="F:adenylosuccinate synthase activity"/>
    <property type="evidence" value="ECO:0007669"/>
    <property type="project" value="UniProtKB-UniRule"/>
</dbReference>
<dbReference type="GO" id="GO:0016208">
    <property type="term" value="F:AMP binding"/>
    <property type="evidence" value="ECO:0007669"/>
    <property type="project" value="EnsemblFungi"/>
</dbReference>
<dbReference type="GO" id="GO:0019002">
    <property type="term" value="F:GMP binding"/>
    <property type="evidence" value="ECO:0007669"/>
    <property type="project" value="EnsemblFungi"/>
</dbReference>
<dbReference type="GO" id="GO:0005525">
    <property type="term" value="F:GTP binding"/>
    <property type="evidence" value="ECO:0007669"/>
    <property type="project" value="UniProtKB-UniRule"/>
</dbReference>
<dbReference type="GO" id="GO:0000287">
    <property type="term" value="F:magnesium ion binding"/>
    <property type="evidence" value="ECO:0007669"/>
    <property type="project" value="UniProtKB-UniRule"/>
</dbReference>
<dbReference type="GO" id="GO:0044208">
    <property type="term" value="P:'de novo' AMP biosynthetic process"/>
    <property type="evidence" value="ECO:0007669"/>
    <property type="project" value="UniProtKB-UniRule"/>
</dbReference>
<dbReference type="GO" id="GO:0071276">
    <property type="term" value="P:cellular response to cadmium ion"/>
    <property type="evidence" value="ECO:0007669"/>
    <property type="project" value="EnsemblFungi"/>
</dbReference>
<dbReference type="GO" id="GO:0046040">
    <property type="term" value="P:IMP metabolic process"/>
    <property type="evidence" value="ECO:0007669"/>
    <property type="project" value="TreeGrafter"/>
</dbReference>
<dbReference type="CDD" id="cd03108">
    <property type="entry name" value="AdSS"/>
    <property type="match status" value="1"/>
</dbReference>
<dbReference type="FunFam" id="1.10.300.10:FF:000001">
    <property type="entry name" value="Adenylosuccinate synthetase"/>
    <property type="match status" value="1"/>
</dbReference>
<dbReference type="FunFam" id="3.90.170.10:FF:000001">
    <property type="entry name" value="Adenylosuccinate synthetase"/>
    <property type="match status" value="1"/>
</dbReference>
<dbReference type="Gene3D" id="3.40.440.10">
    <property type="entry name" value="Adenylosuccinate Synthetase, subunit A, domain 1"/>
    <property type="match status" value="1"/>
</dbReference>
<dbReference type="Gene3D" id="1.10.300.10">
    <property type="entry name" value="Adenylosuccinate Synthetase, subunit A, domain 2"/>
    <property type="match status" value="1"/>
</dbReference>
<dbReference type="Gene3D" id="3.90.170.10">
    <property type="entry name" value="Adenylosuccinate Synthetase, subunit A, domain 3"/>
    <property type="match status" value="1"/>
</dbReference>
<dbReference type="HAMAP" id="MF_00011">
    <property type="entry name" value="Adenylosucc_synth"/>
    <property type="match status" value="1"/>
</dbReference>
<dbReference type="InterPro" id="IPR018220">
    <property type="entry name" value="Adenylosuccin_syn_GTP-bd"/>
</dbReference>
<dbReference type="InterPro" id="IPR033128">
    <property type="entry name" value="Adenylosuccin_syn_Lys_AS"/>
</dbReference>
<dbReference type="InterPro" id="IPR042109">
    <property type="entry name" value="Adenylosuccinate_synth_dom1"/>
</dbReference>
<dbReference type="InterPro" id="IPR042110">
    <property type="entry name" value="Adenylosuccinate_synth_dom2"/>
</dbReference>
<dbReference type="InterPro" id="IPR042111">
    <property type="entry name" value="Adenylosuccinate_synth_dom3"/>
</dbReference>
<dbReference type="InterPro" id="IPR001114">
    <property type="entry name" value="Adenylosuccinate_synthetase"/>
</dbReference>
<dbReference type="InterPro" id="IPR027417">
    <property type="entry name" value="P-loop_NTPase"/>
</dbReference>
<dbReference type="NCBIfam" id="NF002223">
    <property type="entry name" value="PRK01117.1"/>
    <property type="match status" value="1"/>
</dbReference>
<dbReference type="NCBIfam" id="TIGR00184">
    <property type="entry name" value="purA"/>
    <property type="match status" value="1"/>
</dbReference>
<dbReference type="PANTHER" id="PTHR11846">
    <property type="entry name" value="ADENYLOSUCCINATE SYNTHETASE"/>
    <property type="match status" value="1"/>
</dbReference>
<dbReference type="PANTHER" id="PTHR11846:SF0">
    <property type="entry name" value="ADENYLOSUCCINATE SYNTHETASE"/>
    <property type="match status" value="1"/>
</dbReference>
<dbReference type="Pfam" id="PF00709">
    <property type="entry name" value="Adenylsucc_synt"/>
    <property type="match status" value="1"/>
</dbReference>
<dbReference type="SMART" id="SM00788">
    <property type="entry name" value="Adenylsucc_synt"/>
    <property type="match status" value="1"/>
</dbReference>
<dbReference type="SUPFAM" id="SSF52540">
    <property type="entry name" value="P-loop containing nucleoside triphosphate hydrolases"/>
    <property type="match status" value="1"/>
</dbReference>
<dbReference type="PROSITE" id="PS01266">
    <property type="entry name" value="ADENYLOSUCCIN_SYN_1"/>
    <property type="match status" value="1"/>
</dbReference>
<dbReference type="PROSITE" id="PS00513">
    <property type="entry name" value="ADENYLOSUCCIN_SYN_2"/>
    <property type="match status" value="1"/>
</dbReference>
<protein>
    <recommendedName>
        <fullName evidence="2">Adenylosuccinate synthetase</fullName>
        <shortName evidence="2">AMPSase</shortName>
        <shortName evidence="2">AdSS</shortName>
        <ecNumber evidence="2">6.3.4.4</ecNumber>
    </recommendedName>
    <alternativeName>
        <fullName evidence="2">IMP--aspartate ligase</fullName>
    </alternativeName>
</protein>
<reference key="1">
    <citation type="journal article" date="2015" name="Genome Announc.">
        <title>Draft genome sequence of the cellulolytic fungus Chaetomium globosum.</title>
        <authorList>
            <person name="Cuomo C.A."/>
            <person name="Untereiner W.A."/>
            <person name="Ma L.-J."/>
            <person name="Grabherr M."/>
            <person name="Birren B.W."/>
        </authorList>
    </citation>
    <scope>NUCLEOTIDE SEQUENCE [LARGE SCALE GENOMIC DNA]</scope>
    <source>
        <strain>ATCC 6205 / CBS 148.51 / DSM 1962 / NBRC 6347 / NRRL 1970</strain>
    </source>
</reference>
<keyword id="KW-0963">Cytoplasm</keyword>
<keyword id="KW-0342">GTP-binding</keyword>
<keyword id="KW-0436">Ligase</keyword>
<keyword id="KW-0460">Magnesium</keyword>
<keyword id="KW-0479">Metal-binding</keyword>
<keyword id="KW-0547">Nucleotide-binding</keyword>
<keyword id="KW-0658">Purine biosynthesis</keyword>
<keyword id="KW-1185">Reference proteome</keyword>
<name>PURA_CHAGB</name>
<organism>
    <name type="scientific">Chaetomium globosum (strain ATCC 6205 / CBS 148.51 / DSM 1962 / NBRC 6347 / NRRL 1970)</name>
    <name type="common">Soil fungus</name>
    <dbReference type="NCBI Taxonomy" id="306901"/>
    <lineage>
        <taxon>Eukaryota</taxon>
        <taxon>Fungi</taxon>
        <taxon>Dikarya</taxon>
        <taxon>Ascomycota</taxon>
        <taxon>Pezizomycotina</taxon>
        <taxon>Sordariomycetes</taxon>
        <taxon>Sordariomycetidae</taxon>
        <taxon>Sordariales</taxon>
        <taxon>Chaetomiaceae</taxon>
        <taxon>Chaetomium</taxon>
    </lineage>
</organism>
<proteinExistence type="inferred from homology"/>
<feature type="chain" id="PRO_0000399331" description="Adenylosuccinate synthetase">
    <location>
        <begin position="1"/>
        <end position="419"/>
    </location>
</feature>
<feature type="active site" description="Proton acceptor" evidence="2">
    <location>
        <position position="12"/>
    </location>
</feature>
<feature type="active site" description="Proton donor" evidence="2">
    <location>
        <position position="40"/>
    </location>
</feature>
<feature type="binding site" evidence="2">
    <location>
        <begin position="11"/>
        <end position="17"/>
    </location>
    <ligand>
        <name>GTP</name>
        <dbReference type="ChEBI" id="CHEBI:37565"/>
    </ligand>
</feature>
<feature type="binding site" description="in other chain" evidence="2">
    <location>
        <begin position="12"/>
        <end position="15"/>
    </location>
    <ligand>
        <name>IMP</name>
        <dbReference type="ChEBI" id="CHEBI:58053"/>
        <note>ligand shared between dimeric partners</note>
    </ligand>
</feature>
<feature type="binding site" evidence="2">
    <location>
        <position position="12"/>
    </location>
    <ligand>
        <name>Mg(2+)</name>
        <dbReference type="ChEBI" id="CHEBI:18420"/>
    </ligand>
</feature>
<feature type="binding site" description="in other chain" evidence="2">
    <location>
        <begin position="37"/>
        <end position="40"/>
    </location>
    <ligand>
        <name>IMP</name>
        <dbReference type="ChEBI" id="CHEBI:58053"/>
        <note>ligand shared between dimeric partners</note>
    </ligand>
</feature>
<feature type="binding site" evidence="2">
    <location>
        <begin position="39"/>
        <end position="41"/>
    </location>
    <ligand>
        <name>GTP</name>
        <dbReference type="ChEBI" id="CHEBI:37565"/>
    </ligand>
</feature>
<feature type="binding site" evidence="2">
    <location>
        <position position="39"/>
    </location>
    <ligand>
        <name>Mg(2+)</name>
        <dbReference type="ChEBI" id="CHEBI:18420"/>
    </ligand>
</feature>
<feature type="binding site" description="in other chain" evidence="2">
    <location>
        <position position="129"/>
    </location>
    <ligand>
        <name>IMP</name>
        <dbReference type="ChEBI" id="CHEBI:58053"/>
        <note>ligand shared between dimeric partners</note>
    </ligand>
</feature>
<feature type="binding site" evidence="2">
    <location>
        <position position="143"/>
    </location>
    <ligand>
        <name>IMP</name>
        <dbReference type="ChEBI" id="CHEBI:58053"/>
        <note>ligand shared between dimeric partners</note>
    </ligand>
</feature>
<feature type="binding site" description="in other chain" evidence="2">
    <location>
        <position position="221"/>
    </location>
    <ligand>
        <name>IMP</name>
        <dbReference type="ChEBI" id="CHEBI:58053"/>
        <note>ligand shared between dimeric partners</note>
    </ligand>
</feature>
<feature type="binding site" description="in other chain" evidence="2">
    <location>
        <position position="236"/>
    </location>
    <ligand>
        <name>IMP</name>
        <dbReference type="ChEBI" id="CHEBI:58053"/>
        <note>ligand shared between dimeric partners</note>
    </ligand>
</feature>
<feature type="binding site" evidence="2">
    <location>
        <begin position="292"/>
        <end position="298"/>
    </location>
    <ligand>
        <name>substrate</name>
    </ligand>
</feature>
<feature type="binding site" description="in other chain" evidence="2">
    <location>
        <position position="296"/>
    </location>
    <ligand>
        <name>IMP</name>
        <dbReference type="ChEBI" id="CHEBI:58053"/>
        <note>ligand shared between dimeric partners</note>
    </ligand>
</feature>
<feature type="binding site" evidence="2">
    <location>
        <position position="298"/>
    </location>
    <ligand>
        <name>GTP</name>
        <dbReference type="ChEBI" id="CHEBI:37565"/>
    </ligand>
</feature>
<feature type="binding site" evidence="2">
    <location>
        <begin position="324"/>
        <end position="326"/>
    </location>
    <ligand>
        <name>GTP</name>
        <dbReference type="ChEBI" id="CHEBI:37565"/>
    </ligand>
</feature>
<feature type="binding site" evidence="2">
    <location>
        <begin position="408"/>
        <end position="410"/>
    </location>
    <ligand>
        <name>GTP</name>
        <dbReference type="ChEBI" id="CHEBI:37565"/>
    </ligand>
</feature>
<comment type="function">
    <text evidence="1">Plays an important role in the de novo pathway and in the salvage pathway of purine nucleotide biosynthesis. Catalyzes the first committed step in the biosynthesis of AMP from IMP (By similarity).</text>
</comment>
<comment type="catalytic activity">
    <reaction evidence="2">
        <text>IMP + L-aspartate + GTP = N(6)-(1,2-dicarboxyethyl)-AMP + GDP + phosphate + 2 H(+)</text>
        <dbReference type="Rhea" id="RHEA:15753"/>
        <dbReference type="ChEBI" id="CHEBI:15378"/>
        <dbReference type="ChEBI" id="CHEBI:29991"/>
        <dbReference type="ChEBI" id="CHEBI:37565"/>
        <dbReference type="ChEBI" id="CHEBI:43474"/>
        <dbReference type="ChEBI" id="CHEBI:57567"/>
        <dbReference type="ChEBI" id="CHEBI:58053"/>
        <dbReference type="ChEBI" id="CHEBI:58189"/>
        <dbReference type="EC" id="6.3.4.4"/>
    </reaction>
</comment>
<comment type="cofactor">
    <cofactor evidence="2">
        <name>Mg(2+)</name>
        <dbReference type="ChEBI" id="CHEBI:18420"/>
    </cofactor>
    <text evidence="2">Binds 1 Mg(2+) ion per subunit.</text>
</comment>
<comment type="pathway">
    <text evidence="2">Purine metabolism; AMP biosynthesis via de novo pathway; AMP from IMP: step 1/2.</text>
</comment>
<comment type="subunit">
    <text evidence="2">Homodimer.</text>
</comment>
<comment type="subcellular location">
    <subcellularLocation>
        <location evidence="2">Cytoplasm</location>
    </subcellularLocation>
</comment>
<comment type="similarity">
    <text evidence="2">Belongs to the adenylosuccinate synthetase family.</text>
</comment>
<sequence>MATIILGSQWGDEGKGKLSDILCQKARVCARAAGGHNAGHSVVANGVSYDFHLLPSGLVNPQCTNLIGSGVVFNVQAFFKELAALEEKGLSHARKNLLVSDRAQVNLELHARVDGLEERELAGNKIGTTGRGIGPSYANKAARNGIRVHEIFDQESFEAKLRRLAEGYKKRFGDLLEYDVEEEIARFRDYREKLPDFVVDAVNYMQAAQASGVDILIEGANALMLDIDYGTYPFVTSSNTGLGGVITGLAVNPRRINVAKAYTTRVGEGIFKSEDVGEAGKKLQDIGREWGVSTGRKRRCGWLDLVVLKYSASVNYYTAWNLTKLDVLDTFPTLKVAVAYKDPETGKELEYFPADLGYLERCEVVYREFEGWQTPTTAVKKFEDLPRQAQMYVRFVEEFTGVPVKWIGTGPGRDDMIYL</sequence>
<accession>Q2H9E8</accession>
<evidence type="ECO:0000250" key="1"/>
<evidence type="ECO:0000255" key="2">
    <source>
        <dbReference type="HAMAP-Rule" id="MF_03125"/>
    </source>
</evidence>
<gene>
    <name type="ORF">CHGG_03156</name>
</gene>